<feature type="signal peptide" evidence="1">
    <location>
        <begin position="1"/>
        <end position="19"/>
    </location>
</feature>
<feature type="chain" id="PRO_0000014092" description="Uncharacterized protein Mb1302c">
    <location>
        <begin position="20"/>
        <end position="113"/>
    </location>
</feature>
<keyword id="KW-1185">Reference proteome</keyword>
<keyword id="KW-0732">Signal</keyword>
<protein>
    <recommendedName>
        <fullName>Uncharacterized protein Mb1302c</fullName>
    </recommendedName>
</protein>
<evidence type="ECO:0000255" key="1"/>
<evidence type="ECO:0000305" key="2"/>
<sequence length="113" mass="11589">MLSPLSPRIIAAFTTAVGAAAIGLAVATAGTAGANTKDEAFIAQMESIGVTFSSPQVATQQAQLVCKKLASGETGTEIAEEVLSQTNLTTKQAAYFVVDATKAYCPQYASQLT</sequence>
<name>Y1302_MYCBO</name>
<reference key="1">
    <citation type="journal article" date="2003" name="Proc. Natl. Acad. Sci. U.S.A.">
        <title>The complete genome sequence of Mycobacterium bovis.</title>
        <authorList>
            <person name="Garnier T."/>
            <person name="Eiglmeier K."/>
            <person name="Camus J.-C."/>
            <person name="Medina N."/>
            <person name="Mansoor H."/>
            <person name="Pryor M."/>
            <person name="Duthoy S."/>
            <person name="Grondin S."/>
            <person name="Lacroix C."/>
            <person name="Monsempe C."/>
            <person name="Simon S."/>
            <person name="Harris B."/>
            <person name="Atkin R."/>
            <person name="Doggett J."/>
            <person name="Mayes R."/>
            <person name="Keating L."/>
            <person name="Wheeler P.R."/>
            <person name="Parkhill J."/>
            <person name="Barrell B.G."/>
            <person name="Cole S.T."/>
            <person name="Gordon S.V."/>
            <person name="Hewinson R.G."/>
        </authorList>
    </citation>
    <scope>NUCLEOTIDE SEQUENCE [LARGE SCALE GENOMIC DNA]</scope>
    <source>
        <strain>ATCC BAA-935 / AF2122/97</strain>
    </source>
</reference>
<reference key="2">
    <citation type="journal article" date="2017" name="Genome Announc.">
        <title>Updated reference genome sequence and annotation of Mycobacterium bovis AF2122/97.</title>
        <authorList>
            <person name="Malone K.M."/>
            <person name="Farrell D."/>
            <person name="Stuber T.P."/>
            <person name="Schubert O.T."/>
            <person name="Aebersold R."/>
            <person name="Robbe-Austerman S."/>
            <person name="Gordon S.V."/>
        </authorList>
    </citation>
    <scope>NUCLEOTIDE SEQUENCE [LARGE SCALE GENOMIC DNA]</scope>
    <scope>GENOME REANNOTATION</scope>
    <source>
        <strain>ATCC BAA-935 / AF2122/97</strain>
    </source>
</reference>
<proteinExistence type="inferred from homology"/>
<accession>P64794</accession>
<accession>A0A1R3XY74</accession>
<accession>Q11048</accession>
<accession>X2BHA4</accession>
<dbReference type="EMBL" id="LT708304">
    <property type="protein sequence ID" value="SIT99905.1"/>
    <property type="molecule type" value="Genomic_DNA"/>
</dbReference>
<dbReference type="RefSeq" id="NP_854956.1">
    <property type="nucleotide sequence ID" value="NC_002945.3"/>
</dbReference>
<dbReference type="RefSeq" id="WP_003406566.1">
    <property type="nucleotide sequence ID" value="NC_002945.4"/>
</dbReference>
<dbReference type="SMR" id="P64794"/>
<dbReference type="KEGG" id="mbo:BQ2027_MB1302C"/>
<dbReference type="PATRIC" id="fig|233413.5.peg.1427"/>
<dbReference type="Proteomes" id="UP000001419">
    <property type="component" value="Chromosome"/>
</dbReference>
<dbReference type="InterPro" id="IPR007969">
    <property type="entry name" value="DUF732"/>
</dbReference>
<dbReference type="Pfam" id="PF05305">
    <property type="entry name" value="DUF732"/>
    <property type="match status" value="1"/>
</dbReference>
<organism>
    <name type="scientific">Mycobacterium bovis (strain ATCC BAA-935 / AF2122/97)</name>
    <dbReference type="NCBI Taxonomy" id="233413"/>
    <lineage>
        <taxon>Bacteria</taxon>
        <taxon>Bacillati</taxon>
        <taxon>Actinomycetota</taxon>
        <taxon>Actinomycetes</taxon>
        <taxon>Mycobacteriales</taxon>
        <taxon>Mycobacteriaceae</taxon>
        <taxon>Mycobacterium</taxon>
        <taxon>Mycobacterium tuberculosis complex</taxon>
    </lineage>
</organism>
<comment type="similarity">
    <text evidence="2">To M.tuberculosis Rv1291c.</text>
</comment>
<gene>
    <name type="ordered locus">BQ2027_MB1302C</name>
</gene>